<dbReference type="EMBL" id="CP000503">
    <property type="protein sequence ID" value="ABM23026.1"/>
    <property type="molecule type" value="Genomic_DNA"/>
</dbReference>
<dbReference type="RefSeq" id="WP_011787579.1">
    <property type="nucleotide sequence ID" value="NC_008750.1"/>
</dbReference>
<dbReference type="SMR" id="A1RED1"/>
<dbReference type="GeneID" id="67441777"/>
<dbReference type="KEGG" id="shw:Sputw3181_0173"/>
<dbReference type="HOGENOM" id="CLU_065898_2_2_6"/>
<dbReference type="Proteomes" id="UP000002597">
    <property type="component" value="Chromosome"/>
</dbReference>
<dbReference type="GO" id="GO:0015935">
    <property type="term" value="C:small ribosomal subunit"/>
    <property type="evidence" value="ECO:0007669"/>
    <property type="project" value="InterPro"/>
</dbReference>
<dbReference type="GO" id="GO:0019843">
    <property type="term" value="F:rRNA binding"/>
    <property type="evidence" value="ECO:0007669"/>
    <property type="project" value="UniProtKB-UniRule"/>
</dbReference>
<dbReference type="GO" id="GO:0003735">
    <property type="term" value="F:structural constituent of ribosome"/>
    <property type="evidence" value="ECO:0007669"/>
    <property type="project" value="InterPro"/>
</dbReference>
<dbReference type="GO" id="GO:0006412">
    <property type="term" value="P:translation"/>
    <property type="evidence" value="ECO:0007669"/>
    <property type="project" value="UniProtKB-UniRule"/>
</dbReference>
<dbReference type="FunFam" id="3.30.160.20:FF:000001">
    <property type="entry name" value="30S ribosomal protein S5"/>
    <property type="match status" value="1"/>
</dbReference>
<dbReference type="FunFam" id="3.30.230.10:FF:000002">
    <property type="entry name" value="30S ribosomal protein S5"/>
    <property type="match status" value="1"/>
</dbReference>
<dbReference type="Gene3D" id="3.30.160.20">
    <property type="match status" value="1"/>
</dbReference>
<dbReference type="Gene3D" id="3.30.230.10">
    <property type="match status" value="1"/>
</dbReference>
<dbReference type="HAMAP" id="MF_01307_B">
    <property type="entry name" value="Ribosomal_uS5_B"/>
    <property type="match status" value="1"/>
</dbReference>
<dbReference type="InterPro" id="IPR020568">
    <property type="entry name" value="Ribosomal_Su5_D2-typ_SF"/>
</dbReference>
<dbReference type="InterPro" id="IPR000851">
    <property type="entry name" value="Ribosomal_uS5"/>
</dbReference>
<dbReference type="InterPro" id="IPR005712">
    <property type="entry name" value="Ribosomal_uS5_bac-type"/>
</dbReference>
<dbReference type="InterPro" id="IPR005324">
    <property type="entry name" value="Ribosomal_uS5_C"/>
</dbReference>
<dbReference type="InterPro" id="IPR013810">
    <property type="entry name" value="Ribosomal_uS5_N"/>
</dbReference>
<dbReference type="InterPro" id="IPR018192">
    <property type="entry name" value="Ribosomal_uS5_N_CS"/>
</dbReference>
<dbReference type="InterPro" id="IPR014721">
    <property type="entry name" value="Ribsml_uS5_D2-typ_fold_subgr"/>
</dbReference>
<dbReference type="NCBIfam" id="TIGR01021">
    <property type="entry name" value="rpsE_bact"/>
    <property type="match status" value="1"/>
</dbReference>
<dbReference type="PANTHER" id="PTHR48277">
    <property type="entry name" value="MITOCHONDRIAL RIBOSOMAL PROTEIN S5"/>
    <property type="match status" value="1"/>
</dbReference>
<dbReference type="PANTHER" id="PTHR48277:SF1">
    <property type="entry name" value="MITOCHONDRIAL RIBOSOMAL PROTEIN S5"/>
    <property type="match status" value="1"/>
</dbReference>
<dbReference type="Pfam" id="PF00333">
    <property type="entry name" value="Ribosomal_S5"/>
    <property type="match status" value="1"/>
</dbReference>
<dbReference type="Pfam" id="PF03719">
    <property type="entry name" value="Ribosomal_S5_C"/>
    <property type="match status" value="1"/>
</dbReference>
<dbReference type="SUPFAM" id="SSF54768">
    <property type="entry name" value="dsRNA-binding domain-like"/>
    <property type="match status" value="1"/>
</dbReference>
<dbReference type="SUPFAM" id="SSF54211">
    <property type="entry name" value="Ribosomal protein S5 domain 2-like"/>
    <property type="match status" value="1"/>
</dbReference>
<dbReference type="PROSITE" id="PS00585">
    <property type="entry name" value="RIBOSOMAL_S5"/>
    <property type="match status" value="1"/>
</dbReference>
<dbReference type="PROSITE" id="PS50881">
    <property type="entry name" value="S5_DSRBD"/>
    <property type="match status" value="1"/>
</dbReference>
<organism>
    <name type="scientific">Shewanella sp. (strain W3-18-1)</name>
    <dbReference type="NCBI Taxonomy" id="351745"/>
    <lineage>
        <taxon>Bacteria</taxon>
        <taxon>Pseudomonadati</taxon>
        <taxon>Pseudomonadota</taxon>
        <taxon>Gammaproteobacteria</taxon>
        <taxon>Alteromonadales</taxon>
        <taxon>Shewanellaceae</taxon>
        <taxon>Shewanella</taxon>
    </lineage>
</organism>
<gene>
    <name evidence="1" type="primary">rpsE</name>
    <name type="ordered locus">Sputw3181_0173</name>
</gene>
<name>RS5_SHESW</name>
<feature type="chain" id="PRO_0000323202" description="Small ribosomal subunit protein uS5">
    <location>
        <begin position="1"/>
        <end position="167"/>
    </location>
</feature>
<feature type="domain" description="S5 DRBM" evidence="1">
    <location>
        <begin position="12"/>
        <end position="75"/>
    </location>
</feature>
<proteinExistence type="inferred from homology"/>
<comment type="function">
    <text evidence="1">With S4 and S12 plays an important role in translational accuracy.</text>
</comment>
<comment type="function">
    <text evidence="1">Located at the back of the 30S subunit body where it stabilizes the conformation of the head with respect to the body.</text>
</comment>
<comment type="subunit">
    <text evidence="1">Part of the 30S ribosomal subunit. Contacts proteins S4 and S8.</text>
</comment>
<comment type="domain">
    <text>The N-terminal domain interacts with the head of the 30S subunit; the C-terminal domain interacts with the body and contacts protein S4. The interaction surface between S4 and S5 is involved in control of translational fidelity.</text>
</comment>
<comment type="similarity">
    <text evidence="1">Belongs to the universal ribosomal protein uS5 family.</text>
</comment>
<sequence>MAKLEAQQKDDLQEKLIAVNRVSKVVKGGRIFSFTALTVVGDGNGKIGYGYGKAREVPAAIQKAMEKARRNMVTVELNAGTLHHPVKGRHTGSRVYMQPASQGTGIIAGGAMRAVLEVAGVHNVLSKAYGSTNPINIVRATVDALVHMKSPSQIAAKRGLNVDEIRG</sequence>
<protein>
    <recommendedName>
        <fullName evidence="1">Small ribosomal subunit protein uS5</fullName>
    </recommendedName>
    <alternativeName>
        <fullName evidence="2">30S ribosomal protein S5</fullName>
    </alternativeName>
</protein>
<evidence type="ECO:0000255" key="1">
    <source>
        <dbReference type="HAMAP-Rule" id="MF_01307"/>
    </source>
</evidence>
<evidence type="ECO:0000305" key="2"/>
<keyword id="KW-0687">Ribonucleoprotein</keyword>
<keyword id="KW-0689">Ribosomal protein</keyword>
<keyword id="KW-0694">RNA-binding</keyword>
<keyword id="KW-0699">rRNA-binding</keyword>
<accession>A1RED1</accession>
<reference key="1">
    <citation type="submission" date="2006-12" db="EMBL/GenBank/DDBJ databases">
        <title>Complete sequence of Shewanella sp. W3-18-1.</title>
        <authorList>
            <consortium name="US DOE Joint Genome Institute"/>
            <person name="Copeland A."/>
            <person name="Lucas S."/>
            <person name="Lapidus A."/>
            <person name="Barry K."/>
            <person name="Detter J.C."/>
            <person name="Glavina del Rio T."/>
            <person name="Hammon N."/>
            <person name="Israni S."/>
            <person name="Dalin E."/>
            <person name="Tice H."/>
            <person name="Pitluck S."/>
            <person name="Chain P."/>
            <person name="Malfatti S."/>
            <person name="Shin M."/>
            <person name="Vergez L."/>
            <person name="Schmutz J."/>
            <person name="Larimer F."/>
            <person name="Land M."/>
            <person name="Hauser L."/>
            <person name="Kyrpides N."/>
            <person name="Lykidis A."/>
            <person name="Tiedje J."/>
            <person name="Richardson P."/>
        </authorList>
    </citation>
    <scope>NUCLEOTIDE SEQUENCE [LARGE SCALE GENOMIC DNA]</scope>
    <source>
        <strain>W3-18-1</strain>
    </source>
</reference>